<proteinExistence type="inferred from homology"/>
<dbReference type="EMBL" id="CP000036">
    <property type="protein sequence ID" value="ABB68404.1"/>
    <property type="molecule type" value="Genomic_DNA"/>
</dbReference>
<dbReference type="RefSeq" id="WP_000710769.1">
    <property type="nucleotide sequence ID" value="NC_007613.1"/>
</dbReference>
<dbReference type="SMR" id="Q31U54"/>
<dbReference type="GeneID" id="93777962"/>
<dbReference type="KEGG" id="sbo:SBO_3953"/>
<dbReference type="HOGENOM" id="CLU_114306_4_3_6"/>
<dbReference type="Proteomes" id="UP000007067">
    <property type="component" value="Chromosome"/>
</dbReference>
<dbReference type="GO" id="GO:1990904">
    <property type="term" value="C:ribonucleoprotein complex"/>
    <property type="evidence" value="ECO:0007669"/>
    <property type="project" value="UniProtKB-KW"/>
</dbReference>
<dbReference type="GO" id="GO:0005840">
    <property type="term" value="C:ribosome"/>
    <property type="evidence" value="ECO:0007669"/>
    <property type="project" value="UniProtKB-KW"/>
</dbReference>
<dbReference type="GO" id="GO:0046872">
    <property type="term" value="F:metal ion binding"/>
    <property type="evidence" value="ECO:0007669"/>
    <property type="project" value="UniProtKB-KW"/>
</dbReference>
<dbReference type="GO" id="GO:0019843">
    <property type="term" value="F:rRNA binding"/>
    <property type="evidence" value="ECO:0007669"/>
    <property type="project" value="UniProtKB-KW"/>
</dbReference>
<dbReference type="GO" id="GO:0003735">
    <property type="term" value="F:structural constituent of ribosome"/>
    <property type="evidence" value="ECO:0007669"/>
    <property type="project" value="InterPro"/>
</dbReference>
<dbReference type="GO" id="GO:0006412">
    <property type="term" value="P:translation"/>
    <property type="evidence" value="ECO:0007669"/>
    <property type="project" value="UniProtKB-UniRule"/>
</dbReference>
<dbReference type="FunFam" id="4.10.830.30:FF:000001">
    <property type="entry name" value="50S ribosomal protein L31"/>
    <property type="match status" value="1"/>
</dbReference>
<dbReference type="Gene3D" id="4.10.830.30">
    <property type="entry name" value="Ribosomal protein L31"/>
    <property type="match status" value="1"/>
</dbReference>
<dbReference type="HAMAP" id="MF_00501">
    <property type="entry name" value="Ribosomal_bL31_1"/>
    <property type="match status" value="1"/>
</dbReference>
<dbReference type="InterPro" id="IPR034704">
    <property type="entry name" value="Ribosomal_bL28/bL31-like_sf"/>
</dbReference>
<dbReference type="InterPro" id="IPR002150">
    <property type="entry name" value="Ribosomal_bL31"/>
</dbReference>
<dbReference type="InterPro" id="IPR027491">
    <property type="entry name" value="Ribosomal_bL31_A"/>
</dbReference>
<dbReference type="InterPro" id="IPR042105">
    <property type="entry name" value="Ribosomal_bL31_sf"/>
</dbReference>
<dbReference type="NCBIfam" id="TIGR00105">
    <property type="entry name" value="L31"/>
    <property type="match status" value="1"/>
</dbReference>
<dbReference type="NCBIfam" id="NF000612">
    <property type="entry name" value="PRK00019.1"/>
    <property type="match status" value="1"/>
</dbReference>
<dbReference type="NCBIfam" id="NF001809">
    <property type="entry name" value="PRK00528.1"/>
    <property type="match status" value="1"/>
</dbReference>
<dbReference type="PANTHER" id="PTHR33280">
    <property type="entry name" value="50S RIBOSOMAL PROTEIN L31, CHLOROPLASTIC"/>
    <property type="match status" value="1"/>
</dbReference>
<dbReference type="PANTHER" id="PTHR33280:SF6">
    <property type="entry name" value="LARGE RIBOSOMAL SUBUNIT PROTEIN BL31A"/>
    <property type="match status" value="1"/>
</dbReference>
<dbReference type="Pfam" id="PF01197">
    <property type="entry name" value="Ribosomal_L31"/>
    <property type="match status" value="1"/>
</dbReference>
<dbReference type="PRINTS" id="PR01249">
    <property type="entry name" value="RIBOSOMALL31"/>
</dbReference>
<dbReference type="SUPFAM" id="SSF143800">
    <property type="entry name" value="L28p-like"/>
    <property type="match status" value="1"/>
</dbReference>
<dbReference type="PROSITE" id="PS01143">
    <property type="entry name" value="RIBOSOMAL_L31"/>
    <property type="match status" value="1"/>
</dbReference>
<reference key="1">
    <citation type="journal article" date="2005" name="Nucleic Acids Res.">
        <title>Genome dynamics and diversity of Shigella species, the etiologic agents of bacillary dysentery.</title>
        <authorList>
            <person name="Yang F."/>
            <person name="Yang J."/>
            <person name="Zhang X."/>
            <person name="Chen L."/>
            <person name="Jiang Y."/>
            <person name="Yan Y."/>
            <person name="Tang X."/>
            <person name="Wang J."/>
            <person name="Xiong Z."/>
            <person name="Dong J."/>
            <person name="Xue Y."/>
            <person name="Zhu Y."/>
            <person name="Xu X."/>
            <person name="Sun L."/>
            <person name="Chen S."/>
            <person name="Nie H."/>
            <person name="Peng J."/>
            <person name="Xu J."/>
            <person name="Wang Y."/>
            <person name="Yuan Z."/>
            <person name="Wen Y."/>
            <person name="Yao Z."/>
            <person name="Shen Y."/>
            <person name="Qiang B."/>
            <person name="Hou Y."/>
            <person name="Yu J."/>
            <person name="Jin Q."/>
        </authorList>
    </citation>
    <scope>NUCLEOTIDE SEQUENCE [LARGE SCALE GENOMIC DNA]</scope>
    <source>
        <strain>Sb227</strain>
    </source>
</reference>
<keyword id="KW-0007">Acetylation</keyword>
<keyword id="KW-0479">Metal-binding</keyword>
<keyword id="KW-0687">Ribonucleoprotein</keyword>
<keyword id="KW-0689">Ribosomal protein</keyword>
<keyword id="KW-0694">RNA-binding</keyword>
<keyword id="KW-0699">rRNA-binding</keyword>
<keyword id="KW-0862">Zinc</keyword>
<evidence type="ECO:0000255" key="1">
    <source>
        <dbReference type="HAMAP-Rule" id="MF_00501"/>
    </source>
</evidence>
<evidence type="ECO:0000305" key="2"/>
<name>RL31_SHIBS</name>
<feature type="chain" id="PRO_0000259227" description="Large ribosomal subunit protein bL31">
    <location>
        <begin position="1"/>
        <end position="70"/>
    </location>
</feature>
<feature type="binding site" evidence="1">
    <location>
        <position position="16"/>
    </location>
    <ligand>
        <name>Zn(2+)</name>
        <dbReference type="ChEBI" id="CHEBI:29105"/>
    </ligand>
</feature>
<feature type="binding site" evidence="1">
    <location>
        <position position="18"/>
    </location>
    <ligand>
        <name>Zn(2+)</name>
        <dbReference type="ChEBI" id="CHEBI:29105"/>
    </ligand>
</feature>
<feature type="binding site" evidence="1">
    <location>
        <position position="37"/>
    </location>
    <ligand>
        <name>Zn(2+)</name>
        <dbReference type="ChEBI" id="CHEBI:29105"/>
    </ligand>
</feature>
<feature type="binding site" evidence="1">
    <location>
        <position position="40"/>
    </location>
    <ligand>
        <name>Zn(2+)</name>
        <dbReference type="ChEBI" id="CHEBI:29105"/>
    </ligand>
</feature>
<feature type="modified residue" description="N6-acetyllysine" evidence="1">
    <location>
        <position position="8"/>
    </location>
</feature>
<accession>Q31U54</accession>
<protein>
    <recommendedName>
        <fullName evidence="1">Large ribosomal subunit protein bL31</fullName>
    </recommendedName>
    <alternativeName>
        <fullName evidence="2">50S ribosomal protein L31</fullName>
    </alternativeName>
</protein>
<comment type="function">
    <text evidence="1">Binds the 23S rRNA.</text>
</comment>
<comment type="cofactor">
    <cofactor evidence="1">
        <name>Zn(2+)</name>
        <dbReference type="ChEBI" id="CHEBI:29105"/>
    </cofactor>
    <text evidence="1">Binds 1 zinc ion per subunit.</text>
</comment>
<comment type="subunit">
    <text evidence="1">Part of the 50S ribosomal subunit.</text>
</comment>
<comment type="similarity">
    <text evidence="1">Belongs to the bacterial ribosomal protein bL31 family. Type A subfamily.</text>
</comment>
<sequence>MKKDIHPKYEEITASCSCGNVMKIRSTVGHDLNLDVCSKCHPFFTGKQRDVATGGRVDRFNKRFNIPGSK</sequence>
<gene>
    <name evidence="1" type="primary">rpmE</name>
    <name type="ordered locus">SBO_3953</name>
</gene>
<organism>
    <name type="scientific">Shigella boydii serotype 4 (strain Sb227)</name>
    <dbReference type="NCBI Taxonomy" id="300268"/>
    <lineage>
        <taxon>Bacteria</taxon>
        <taxon>Pseudomonadati</taxon>
        <taxon>Pseudomonadota</taxon>
        <taxon>Gammaproteobacteria</taxon>
        <taxon>Enterobacterales</taxon>
        <taxon>Enterobacteriaceae</taxon>
        <taxon>Shigella</taxon>
    </lineage>
</organism>